<feature type="chain" id="PRO_0000209031" description="Probable potassium transport system protein Kup 3">
    <location>
        <begin position="1"/>
        <end position="629"/>
    </location>
</feature>
<feature type="transmembrane region" description="Helical" evidence="1">
    <location>
        <begin position="20"/>
        <end position="40"/>
    </location>
</feature>
<feature type="transmembrane region" description="Helical" evidence="1">
    <location>
        <begin position="54"/>
        <end position="74"/>
    </location>
</feature>
<feature type="transmembrane region" description="Helical" evidence="1">
    <location>
        <begin position="106"/>
        <end position="126"/>
    </location>
</feature>
<feature type="transmembrane region" description="Helical" evidence="1">
    <location>
        <begin position="143"/>
        <end position="163"/>
    </location>
</feature>
<feature type="transmembrane region" description="Helical" evidence="1">
    <location>
        <begin position="171"/>
        <end position="191"/>
    </location>
</feature>
<feature type="transmembrane region" description="Helical" evidence="1">
    <location>
        <begin position="212"/>
        <end position="232"/>
    </location>
</feature>
<feature type="transmembrane region" description="Helical" evidence="1">
    <location>
        <begin position="253"/>
        <end position="273"/>
    </location>
</feature>
<feature type="transmembrane region" description="Helical" evidence="1">
    <location>
        <begin position="291"/>
        <end position="311"/>
    </location>
</feature>
<feature type="transmembrane region" description="Helical" evidence="1">
    <location>
        <begin position="343"/>
        <end position="363"/>
    </location>
</feature>
<feature type="transmembrane region" description="Helical" evidence="1">
    <location>
        <begin position="372"/>
        <end position="392"/>
    </location>
</feature>
<feature type="transmembrane region" description="Helical" evidence="1">
    <location>
        <begin position="400"/>
        <end position="420"/>
    </location>
</feature>
<feature type="transmembrane region" description="Helical" evidence="1">
    <location>
        <begin position="425"/>
        <end position="445"/>
    </location>
</feature>
<comment type="function">
    <text evidence="1">Transport of potassium into the cell. Likely operates as a K(+):H(+) symporter.</text>
</comment>
<comment type="catalytic activity">
    <reaction evidence="1">
        <text>K(+)(in) + H(+)(in) = K(+)(out) + H(+)(out)</text>
        <dbReference type="Rhea" id="RHEA:28490"/>
        <dbReference type="ChEBI" id="CHEBI:15378"/>
        <dbReference type="ChEBI" id="CHEBI:29103"/>
    </reaction>
    <physiologicalReaction direction="right-to-left" evidence="1">
        <dbReference type="Rhea" id="RHEA:28492"/>
    </physiologicalReaction>
</comment>
<comment type="subcellular location">
    <subcellularLocation>
        <location evidence="1">Cell inner membrane</location>
        <topology evidence="1">Multi-pass membrane protein</topology>
    </subcellularLocation>
</comment>
<comment type="similarity">
    <text evidence="1">Belongs to the HAK/KUP transporter (TC 2.A.72) family.</text>
</comment>
<organism>
    <name type="scientific">Legionella pneumophila (strain Paris)</name>
    <dbReference type="NCBI Taxonomy" id="297246"/>
    <lineage>
        <taxon>Bacteria</taxon>
        <taxon>Pseudomonadati</taxon>
        <taxon>Pseudomonadota</taxon>
        <taxon>Gammaproteobacteria</taxon>
        <taxon>Legionellales</taxon>
        <taxon>Legionellaceae</taxon>
        <taxon>Legionella</taxon>
    </lineage>
</organism>
<evidence type="ECO:0000255" key="1">
    <source>
        <dbReference type="HAMAP-Rule" id="MF_01522"/>
    </source>
</evidence>
<dbReference type="EMBL" id="CR628336">
    <property type="protein sequence ID" value="CAH13599.1"/>
    <property type="molecule type" value="Genomic_DNA"/>
</dbReference>
<dbReference type="RefSeq" id="WP_015961562.1">
    <property type="nucleotide sequence ID" value="NC_006368.1"/>
</dbReference>
<dbReference type="KEGG" id="lpp:lpp2446"/>
<dbReference type="LegioList" id="lpp2446"/>
<dbReference type="HOGENOM" id="CLU_008142_4_2_6"/>
<dbReference type="GO" id="GO:0005886">
    <property type="term" value="C:plasma membrane"/>
    <property type="evidence" value="ECO:0007669"/>
    <property type="project" value="UniProtKB-SubCell"/>
</dbReference>
<dbReference type="GO" id="GO:0015079">
    <property type="term" value="F:potassium ion transmembrane transporter activity"/>
    <property type="evidence" value="ECO:0007669"/>
    <property type="project" value="UniProtKB-UniRule"/>
</dbReference>
<dbReference type="GO" id="GO:0015293">
    <property type="term" value="F:symporter activity"/>
    <property type="evidence" value="ECO:0007669"/>
    <property type="project" value="UniProtKB-UniRule"/>
</dbReference>
<dbReference type="HAMAP" id="MF_01522">
    <property type="entry name" value="Kup"/>
    <property type="match status" value="1"/>
</dbReference>
<dbReference type="InterPro" id="IPR003855">
    <property type="entry name" value="K+_transporter"/>
</dbReference>
<dbReference type="InterPro" id="IPR053952">
    <property type="entry name" value="K_trans_C"/>
</dbReference>
<dbReference type="InterPro" id="IPR053951">
    <property type="entry name" value="K_trans_N"/>
</dbReference>
<dbReference type="InterPro" id="IPR023051">
    <property type="entry name" value="Kup"/>
</dbReference>
<dbReference type="PANTHER" id="PTHR30540:SF83">
    <property type="entry name" value="K+ POTASSIUM TRANSPORTER"/>
    <property type="match status" value="1"/>
</dbReference>
<dbReference type="PANTHER" id="PTHR30540">
    <property type="entry name" value="OSMOTIC STRESS POTASSIUM TRANSPORTER"/>
    <property type="match status" value="1"/>
</dbReference>
<dbReference type="Pfam" id="PF02705">
    <property type="entry name" value="K_trans"/>
    <property type="match status" value="1"/>
</dbReference>
<dbReference type="Pfam" id="PF22776">
    <property type="entry name" value="K_trans_C"/>
    <property type="match status" value="1"/>
</dbReference>
<keyword id="KW-0997">Cell inner membrane</keyword>
<keyword id="KW-1003">Cell membrane</keyword>
<keyword id="KW-0406">Ion transport</keyword>
<keyword id="KW-0472">Membrane</keyword>
<keyword id="KW-0630">Potassium</keyword>
<keyword id="KW-0633">Potassium transport</keyword>
<keyword id="KW-0769">Symport</keyword>
<keyword id="KW-0812">Transmembrane</keyword>
<keyword id="KW-1133">Transmembrane helix</keyword>
<keyword id="KW-0813">Transport</keyword>
<protein>
    <recommendedName>
        <fullName evidence="1">Probable potassium transport system protein Kup 3</fullName>
    </recommendedName>
</protein>
<sequence length="629" mass="68820">MPSTRNIEKHNDSNPTLRALSLSALGIVYGDIGTSPLYTFKTVILLAGGGTPDVTTIMGSASLIIWTLIIIASVKYICFALRIDNDGEGGILALMSLLSLKLKQKPFIIAVGLMGAALIYGDGTITPAISVLSAVEGLEILSPSLKYYVLPIAITILITLFAIQSKGTTTIGKAFGPVMAFWFLTIGILGARGVIQHPFVLAAINPVYGLNFLFSNGATGFFILCGVFLCATGAEALYADLGHFGTAPIRCTWFGLAFPSLIFNYLGQAALVLEGASTEHNIFYMLCPSDFLLPLIILSTVATIIASQAIITGAFSMTRQAMQLGWLPRLRVTQTSSEGYGQIYIGVVNWLLMLATLGLIIGFGSSEKLAAAYGIAVSATMLCTTVLLFIALHKLWKWNIITSGLVAGLFMIVDASFFAANLTKFINGGYIPITLAIIIYSMMYIWHKGYKTIAIKQKEKNITVDSFLDSIQKEGVVRVSKTAVFLTSKEQDIPPTLVWHVKKNHVLQDKVIILNINNLSIPWCKPGDQLQIVETGAGIWHAVANYGFMEQPHIPKLLKKLEAQGYDINIKDITYYIGHETIFVRNARHTLSKYIKILFVFMHRNALPMSNYFHLPPESVFEIGRQIEI</sequence>
<gene>
    <name evidence="1" type="primary">kup3</name>
    <name type="ordered locus">lpp2446</name>
</gene>
<proteinExistence type="inferred from homology"/>
<name>KUP3_LEGPA</name>
<reference key="1">
    <citation type="journal article" date="2004" name="Nat. Genet.">
        <title>Evidence in the Legionella pneumophila genome for exploitation of host cell functions and high genome plasticity.</title>
        <authorList>
            <person name="Cazalet C."/>
            <person name="Rusniok C."/>
            <person name="Brueggemann H."/>
            <person name="Zidane N."/>
            <person name="Magnier A."/>
            <person name="Ma L."/>
            <person name="Tichit M."/>
            <person name="Jarraud S."/>
            <person name="Bouchier C."/>
            <person name="Vandenesch F."/>
            <person name="Kunst F."/>
            <person name="Etienne J."/>
            <person name="Glaser P."/>
            <person name="Buchrieser C."/>
        </authorList>
    </citation>
    <scope>NUCLEOTIDE SEQUENCE [LARGE SCALE GENOMIC DNA]</scope>
    <source>
        <strain>Paris</strain>
    </source>
</reference>
<accession>Q5X2E7</accession>